<reference key="1">
    <citation type="submission" date="2003-03" db="EMBL/GenBank/DDBJ databases">
        <title>The complete genome sequence of Neisseria gonorrhoeae.</title>
        <authorList>
            <person name="Lewis L.A."/>
            <person name="Gillaspy A.F."/>
            <person name="McLaughlin R.E."/>
            <person name="Gipson M."/>
            <person name="Ducey T.F."/>
            <person name="Ownbey T."/>
            <person name="Hartman K."/>
            <person name="Nydick C."/>
            <person name="Carson M.B."/>
            <person name="Vaughn J."/>
            <person name="Thomson C."/>
            <person name="Song L."/>
            <person name="Lin S."/>
            <person name="Yuan X."/>
            <person name="Najar F."/>
            <person name="Zhan M."/>
            <person name="Ren Q."/>
            <person name="Zhu H."/>
            <person name="Qi S."/>
            <person name="Kenton S.M."/>
            <person name="Lai H."/>
            <person name="White J.D."/>
            <person name="Clifton S."/>
            <person name="Roe B.A."/>
            <person name="Dyer D.W."/>
        </authorList>
    </citation>
    <scope>NUCLEOTIDE SEQUENCE [LARGE SCALE GENOMIC DNA]</scope>
    <source>
        <strain>ATCC 700825 / FA 1090</strain>
    </source>
</reference>
<accession>Q5F5F4</accession>
<organism>
    <name type="scientific">Neisseria gonorrhoeae (strain ATCC 700825 / FA 1090)</name>
    <dbReference type="NCBI Taxonomy" id="242231"/>
    <lineage>
        <taxon>Bacteria</taxon>
        <taxon>Pseudomonadati</taxon>
        <taxon>Pseudomonadota</taxon>
        <taxon>Betaproteobacteria</taxon>
        <taxon>Neisseriales</taxon>
        <taxon>Neisseriaceae</taxon>
        <taxon>Neisseria</taxon>
    </lineage>
</organism>
<name>EFTS_NEIG1</name>
<evidence type="ECO:0000255" key="1">
    <source>
        <dbReference type="HAMAP-Rule" id="MF_00050"/>
    </source>
</evidence>
<dbReference type="EMBL" id="AE004969">
    <property type="protein sequence ID" value="AAW90583.1"/>
    <property type="molecule type" value="Genomic_DNA"/>
</dbReference>
<dbReference type="RefSeq" id="WP_003686860.1">
    <property type="nucleotide sequence ID" value="NC_002946.2"/>
</dbReference>
<dbReference type="RefSeq" id="YP_208995.1">
    <property type="nucleotide sequence ID" value="NC_002946.2"/>
</dbReference>
<dbReference type="SMR" id="Q5F5F4"/>
<dbReference type="STRING" id="242231.NGO_1974"/>
<dbReference type="KEGG" id="ngo:NGO_1974"/>
<dbReference type="PATRIC" id="fig|242231.10.peg.2383"/>
<dbReference type="HOGENOM" id="CLU_047155_0_2_4"/>
<dbReference type="Proteomes" id="UP000000535">
    <property type="component" value="Chromosome"/>
</dbReference>
<dbReference type="GO" id="GO:0005737">
    <property type="term" value="C:cytoplasm"/>
    <property type="evidence" value="ECO:0007669"/>
    <property type="project" value="UniProtKB-SubCell"/>
</dbReference>
<dbReference type="GO" id="GO:0003746">
    <property type="term" value="F:translation elongation factor activity"/>
    <property type="evidence" value="ECO:0007669"/>
    <property type="project" value="UniProtKB-UniRule"/>
</dbReference>
<dbReference type="CDD" id="cd14275">
    <property type="entry name" value="UBA_EF-Ts"/>
    <property type="match status" value="1"/>
</dbReference>
<dbReference type="FunFam" id="1.10.286.20:FF:000001">
    <property type="entry name" value="Elongation factor Ts"/>
    <property type="match status" value="1"/>
</dbReference>
<dbReference type="FunFam" id="1.10.8.10:FF:000001">
    <property type="entry name" value="Elongation factor Ts"/>
    <property type="match status" value="1"/>
</dbReference>
<dbReference type="FunFam" id="3.30.479.20:FF:000001">
    <property type="entry name" value="Elongation factor Ts"/>
    <property type="match status" value="1"/>
</dbReference>
<dbReference type="Gene3D" id="1.10.286.20">
    <property type="match status" value="1"/>
</dbReference>
<dbReference type="Gene3D" id="1.10.8.10">
    <property type="entry name" value="DNA helicase RuvA subunit, C-terminal domain"/>
    <property type="match status" value="1"/>
</dbReference>
<dbReference type="Gene3D" id="3.30.479.20">
    <property type="entry name" value="Elongation factor Ts, dimerisation domain"/>
    <property type="match status" value="2"/>
</dbReference>
<dbReference type="HAMAP" id="MF_00050">
    <property type="entry name" value="EF_Ts"/>
    <property type="match status" value="1"/>
</dbReference>
<dbReference type="InterPro" id="IPR036402">
    <property type="entry name" value="EF-Ts_dimer_sf"/>
</dbReference>
<dbReference type="InterPro" id="IPR001816">
    <property type="entry name" value="Transl_elong_EFTs/EF1B"/>
</dbReference>
<dbReference type="InterPro" id="IPR014039">
    <property type="entry name" value="Transl_elong_EFTs/EF1B_dimer"/>
</dbReference>
<dbReference type="InterPro" id="IPR018101">
    <property type="entry name" value="Transl_elong_Ts_CS"/>
</dbReference>
<dbReference type="InterPro" id="IPR009060">
    <property type="entry name" value="UBA-like_sf"/>
</dbReference>
<dbReference type="NCBIfam" id="TIGR00116">
    <property type="entry name" value="tsf"/>
    <property type="match status" value="1"/>
</dbReference>
<dbReference type="PANTHER" id="PTHR11741">
    <property type="entry name" value="ELONGATION FACTOR TS"/>
    <property type="match status" value="1"/>
</dbReference>
<dbReference type="PANTHER" id="PTHR11741:SF0">
    <property type="entry name" value="ELONGATION FACTOR TS, MITOCHONDRIAL"/>
    <property type="match status" value="1"/>
</dbReference>
<dbReference type="Pfam" id="PF00889">
    <property type="entry name" value="EF_TS"/>
    <property type="match status" value="1"/>
</dbReference>
<dbReference type="SUPFAM" id="SSF54713">
    <property type="entry name" value="Elongation factor Ts (EF-Ts), dimerisation domain"/>
    <property type="match status" value="2"/>
</dbReference>
<dbReference type="SUPFAM" id="SSF46934">
    <property type="entry name" value="UBA-like"/>
    <property type="match status" value="1"/>
</dbReference>
<dbReference type="PROSITE" id="PS01126">
    <property type="entry name" value="EF_TS_1"/>
    <property type="match status" value="1"/>
</dbReference>
<dbReference type="PROSITE" id="PS01127">
    <property type="entry name" value="EF_TS_2"/>
    <property type="match status" value="1"/>
</dbReference>
<sequence length="284" mass="30359">MAEITAKMVADLRAATGLGMMECKKALVEAEGNFDKAEEILRIKSGAKAGKLAGRTAAEGVLAYAINGNVGALVEVNCETDFVAKDAGFVEFANFVAKTAAEKKPASVEELSELVESERKAIIAKLGENMSVRRFQVIDTANQLVAYIHGALATEGVLVEYKGSEDVARKIGMHIVAAKPQCVSEAEVDAETVEKERHIYTEQAIASGKPADIAAKMVEGRIRKFLAEITLNGQAFVMNPDQTVAQFAKENDTEVVSFIRYKVGDGIEKAVVDYAAEVAAAAKV</sequence>
<protein>
    <recommendedName>
        <fullName evidence="1">Elongation factor Ts</fullName>
        <shortName evidence="1">EF-Ts</shortName>
    </recommendedName>
</protein>
<comment type="function">
    <text evidence="1">Associates with the EF-Tu.GDP complex and induces the exchange of GDP to GTP. It remains bound to the aminoacyl-tRNA.EF-Tu.GTP complex up to the GTP hydrolysis stage on the ribosome.</text>
</comment>
<comment type="subcellular location">
    <subcellularLocation>
        <location evidence="1">Cytoplasm</location>
    </subcellularLocation>
</comment>
<comment type="similarity">
    <text evidence="1">Belongs to the EF-Ts family.</text>
</comment>
<gene>
    <name evidence="1" type="primary">tsf</name>
    <name type="ordered locus">NGO_1974</name>
</gene>
<keyword id="KW-0963">Cytoplasm</keyword>
<keyword id="KW-0251">Elongation factor</keyword>
<keyword id="KW-0648">Protein biosynthesis</keyword>
<keyword id="KW-1185">Reference proteome</keyword>
<feature type="chain" id="PRO_0000241497" description="Elongation factor Ts">
    <location>
        <begin position="1"/>
        <end position="284"/>
    </location>
</feature>
<feature type="region of interest" description="Involved in Mg(2+) ion dislocation from EF-Tu" evidence="1">
    <location>
        <begin position="80"/>
        <end position="83"/>
    </location>
</feature>
<proteinExistence type="inferred from homology"/>